<evidence type="ECO:0000255" key="1">
    <source>
        <dbReference type="HAMAP-Rule" id="MF_01185"/>
    </source>
</evidence>
<organism>
    <name type="scientific">Borreliella burgdorferi (strain ATCC 35210 / DSM 4680 / CIP 102532 / B31)</name>
    <name type="common">Borrelia burgdorferi</name>
    <dbReference type="NCBI Taxonomy" id="224326"/>
    <lineage>
        <taxon>Bacteria</taxon>
        <taxon>Pseudomonadati</taxon>
        <taxon>Spirochaetota</taxon>
        <taxon>Spirochaetia</taxon>
        <taxon>Spirochaetales</taxon>
        <taxon>Borreliaceae</taxon>
        <taxon>Borreliella</taxon>
    </lineage>
</organism>
<feature type="chain" id="PRO_0000272973" description="Flagellar assembly factor FliW">
    <location>
        <begin position="1"/>
        <end position="130"/>
    </location>
</feature>
<keyword id="KW-1005">Bacterial flagellum biogenesis</keyword>
<keyword id="KW-0963">Cytoplasm</keyword>
<keyword id="KW-1185">Reference proteome</keyword>
<keyword id="KW-0810">Translation regulation</keyword>
<gene>
    <name evidence="1" type="primary">fliW</name>
    <name type="ordered locus">BB_0183</name>
</gene>
<protein>
    <recommendedName>
        <fullName evidence="1">Flagellar assembly factor FliW</fullName>
    </recommendedName>
</protein>
<name>FLIW_BORBU</name>
<reference key="1">
    <citation type="journal article" date="1997" name="Nature">
        <title>Genomic sequence of a Lyme disease spirochaete, Borrelia burgdorferi.</title>
        <authorList>
            <person name="Fraser C.M."/>
            <person name="Casjens S."/>
            <person name="Huang W.M."/>
            <person name="Sutton G.G."/>
            <person name="Clayton R.A."/>
            <person name="Lathigra R."/>
            <person name="White O."/>
            <person name="Ketchum K.A."/>
            <person name="Dodson R.J."/>
            <person name="Hickey E.K."/>
            <person name="Gwinn M.L."/>
            <person name="Dougherty B.A."/>
            <person name="Tomb J.-F."/>
            <person name="Fleischmann R.D."/>
            <person name="Richardson D.L."/>
            <person name="Peterson J.D."/>
            <person name="Kerlavage A.R."/>
            <person name="Quackenbush J."/>
            <person name="Salzberg S.L."/>
            <person name="Hanson M."/>
            <person name="van Vugt R."/>
            <person name="Palmer N."/>
            <person name="Adams M.D."/>
            <person name="Gocayne J.D."/>
            <person name="Weidman J.F."/>
            <person name="Utterback T.R."/>
            <person name="Watthey L."/>
            <person name="McDonald L.A."/>
            <person name="Artiach P."/>
            <person name="Bowman C."/>
            <person name="Garland S.A."/>
            <person name="Fujii C."/>
            <person name="Cotton M.D."/>
            <person name="Horst K."/>
            <person name="Roberts K.M."/>
            <person name="Hatch B."/>
            <person name="Smith H.O."/>
            <person name="Venter J.C."/>
        </authorList>
    </citation>
    <scope>NUCLEOTIDE SEQUENCE [LARGE SCALE GENOMIC DNA]</scope>
    <source>
        <strain>ATCC 35210 / DSM 4680 / CIP 102532 / B31</strain>
    </source>
</reference>
<accession>O51201</accession>
<sequence>MIDEKSIEFDFPEGILGFENIKKFIIKDSKYKPFSIMQSINKDVSFLVTSPFNFLSEYLPNIQEKDWSDIKAKEEDEKVILCIINMHVNDYKDITANLKAPIIINKKKLLGKQAICTNEKYSLHHKVFKE</sequence>
<dbReference type="EMBL" id="AE000783">
    <property type="protein sequence ID" value="AAC66577.1"/>
    <property type="molecule type" value="Genomic_DNA"/>
</dbReference>
<dbReference type="PIR" id="G70122">
    <property type="entry name" value="G70122"/>
</dbReference>
<dbReference type="RefSeq" id="NP_212317.1">
    <property type="nucleotide sequence ID" value="NC_001318.1"/>
</dbReference>
<dbReference type="RefSeq" id="WP_002556781.1">
    <property type="nucleotide sequence ID" value="NC_001318.1"/>
</dbReference>
<dbReference type="SMR" id="O51201"/>
<dbReference type="STRING" id="224326.BB_0183"/>
<dbReference type="PaxDb" id="224326-BB_0183"/>
<dbReference type="EnsemblBacteria" id="AAC66577">
    <property type="protein sequence ID" value="AAC66577"/>
    <property type="gene ID" value="BB_0183"/>
</dbReference>
<dbReference type="GeneID" id="56567610"/>
<dbReference type="KEGG" id="bbu:BB_0183"/>
<dbReference type="PATRIC" id="fig|224326.49.peg.580"/>
<dbReference type="HOGENOM" id="CLU_112356_0_2_12"/>
<dbReference type="OrthoDB" id="9801235at2"/>
<dbReference type="Proteomes" id="UP000001807">
    <property type="component" value="Chromosome"/>
</dbReference>
<dbReference type="GO" id="GO:0005737">
    <property type="term" value="C:cytoplasm"/>
    <property type="evidence" value="ECO:0007669"/>
    <property type="project" value="UniProtKB-SubCell"/>
</dbReference>
<dbReference type="GO" id="GO:0044780">
    <property type="term" value="P:bacterial-type flagellum assembly"/>
    <property type="evidence" value="ECO:0007669"/>
    <property type="project" value="UniProtKB-UniRule"/>
</dbReference>
<dbReference type="GO" id="GO:0006417">
    <property type="term" value="P:regulation of translation"/>
    <property type="evidence" value="ECO:0007669"/>
    <property type="project" value="UniProtKB-KW"/>
</dbReference>
<dbReference type="Gene3D" id="2.30.290.10">
    <property type="entry name" value="BH3618-like"/>
    <property type="match status" value="1"/>
</dbReference>
<dbReference type="HAMAP" id="MF_01185">
    <property type="entry name" value="FliW"/>
    <property type="match status" value="1"/>
</dbReference>
<dbReference type="InterPro" id="IPR003775">
    <property type="entry name" value="Flagellar_assembly_factor_FliW"/>
</dbReference>
<dbReference type="InterPro" id="IPR024046">
    <property type="entry name" value="Flagellar_assmbl_FliW_dom_sf"/>
</dbReference>
<dbReference type="NCBIfam" id="NF009793">
    <property type="entry name" value="PRK13285.1-1"/>
    <property type="match status" value="1"/>
</dbReference>
<dbReference type="PANTHER" id="PTHR39190">
    <property type="entry name" value="FLAGELLAR ASSEMBLY FACTOR FLIW"/>
    <property type="match status" value="1"/>
</dbReference>
<dbReference type="PANTHER" id="PTHR39190:SF1">
    <property type="entry name" value="FLAGELLAR ASSEMBLY FACTOR FLIW"/>
    <property type="match status" value="1"/>
</dbReference>
<dbReference type="Pfam" id="PF02623">
    <property type="entry name" value="FliW"/>
    <property type="match status" value="1"/>
</dbReference>
<dbReference type="SUPFAM" id="SSF141457">
    <property type="entry name" value="BH3618-like"/>
    <property type="match status" value="1"/>
</dbReference>
<comment type="function">
    <text evidence="1">Acts as an anti-CsrA protein, binds CsrA and prevents it from repressing translation of its target genes, one of which is flagellin. Binds to flagellin and participates in the assembly of the flagellum.</text>
</comment>
<comment type="subunit">
    <text evidence="1">Interacts with translational regulator CsrA and flagellin(s).</text>
</comment>
<comment type="subcellular location">
    <subcellularLocation>
        <location evidence="1">Cytoplasm</location>
    </subcellularLocation>
</comment>
<comment type="similarity">
    <text evidence="1">Belongs to the FliW family.</text>
</comment>
<proteinExistence type="inferred from homology"/>